<comment type="function">
    <text evidence="3">May function as a molecular transmitter linking various signaling pathways to transcriptional regulation. Negatively regulates the transcriptional repressor E4F1 and may function in cell growth. Inhibits the transcriptional activity of FOXO1 and its apoptotic function by enhancing the interaction of FOXO1 with SIRT1 and FOXO1 deacetylation. Negatively regulates the calcineurin/NFAT signaling pathway in cardiomyocytes (By similarity).</text>
</comment>
<comment type="subunit">
    <text evidence="2 3">Interacts with ZNF638 and TTN/titin. Interacts with E4F1. Interacts with GRB7. Interacts with SIRT1 and FOXO1. Interacts with CEFIP and calcineurin. Interacts with FOXK1.</text>
</comment>
<comment type="subcellular location">
    <subcellularLocation>
        <location evidence="3">Cytoplasm</location>
    </subcellularLocation>
    <subcellularLocation>
        <location evidence="3">Nucleus</location>
    </subcellularLocation>
    <subcellularLocation>
        <location evidence="1">Cytoplasm</location>
        <location evidence="1">Myofibril</location>
        <location evidence="1">Sarcomere</location>
        <location evidence="1">Z line</location>
    </subcellularLocation>
</comment>
<comment type="domain">
    <text evidence="3">The third LIM zinc-binding mediates interaction with E4F1.</text>
</comment>
<accession>Q2KI95</accession>
<evidence type="ECO:0000250" key="1">
    <source>
        <dbReference type="UniProtKB" id="O35115"/>
    </source>
</evidence>
<evidence type="ECO:0000250" key="2">
    <source>
        <dbReference type="UniProtKB" id="O70433"/>
    </source>
</evidence>
<evidence type="ECO:0000250" key="3">
    <source>
        <dbReference type="UniProtKB" id="Q14192"/>
    </source>
</evidence>
<evidence type="ECO:0000255" key="4"/>
<evidence type="ECO:0000255" key="5">
    <source>
        <dbReference type="PROSITE-ProRule" id="PRU00125"/>
    </source>
</evidence>
<name>FHL2_BOVIN</name>
<reference key="1">
    <citation type="submission" date="2006-01" db="EMBL/GenBank/DDBJ databases">
        <authorList>
            <consortium name="NIH - Mammalian Gene Collection (MGC) project"/>
        </authorList>
    </citation>
    <scope>NUCLEOTIDE SEQUENCE [LARGE SCALE MRNA]</scope>
    <source>
        <strain>Hereford</strain>
        <tissue>Heart ventricle</tissue>
    </source>
</reference>
<proteinExistence type="evidence at transcript level"/>
<organism>
    <name type="scientific">Bos taurus</name>
    <name type="common">Bovine</name>
    <dbReference type="NCBI Taxonomy" id="9913"/>
    <lineage>
        <taxon>Eukaryota</taxon>
        <taxon>Metazoa</taxon>
        <taxon>Chordata</taxon>
        <taxon>Craniata</taxon>
        <taxon>Vertebrata</taxon>
        <taxon>Euteleostomi</taxon>
        <taxon>Mammalia</taxon>
        <taxon>Eutheria</taxon>
        <taxon>Laurasiatheria</taxon>
        <taxon>Artiodactyla</taxon>
        <taxon>Ruminantia</taxon>
        <taxon>Pecora</taxon>
        <taxon>Bovidae</taxon>
        <taxon>Bovinae</taxon>
        <taxon>Bos</taxon>
    </lineage>
</organism>
<keyword id="KW-0963">Cytoplasm</keyword>
<keyword id="KW-1017">Isopeptide bond</keyword>
<keyword id="KW-0440">LIM domain</keyword>
<keyword id="KW-0479">Metal-binding</keyword>
<keyword id="KW-0539">Nucleus</keyword>
<keyword id="KW-0597">Phosphoprotein</keyword>
<keyword id="KW-1185">Reference proteome</keyword>
<keyword id="KW-0677">Repeat</keyword>
<keyword id="KW-0804">Transcription</keyword>
<keyword id="KW-0805">Transcription regulation</keyword>
<keyword id="KW-0832">Ubl conjugation</keyword>
<keyword id="KW-0862">Zinc</keyword>
<keyword id="KW-0863">Zinc-finger</keyword>
<dbReference type="EMBL" id="BC112720">
    <property type="protein sequence ID" value="AAI12721.1"/>
    <property type="molecule type" value="mRNA"/>
</dbReference>
<dbReference type="RefSeq" id="NP_001039511.1">
    <property type="nucleotide sequence ID" value="NM_001046046.2"/>
</dbReference>
<dbReference type="RefSeq" id="XP_005212489.1">
    <property type="nucleotide sequence ID" value="XM_005212432.3"/>
</dbReference>
<dbReference type="RefSeq" id="XP_005212490.1">
    <property type="nucleotide sequence ID" value="XM_005212433.5"/>
</dbReference>
<dbReference type="RefSeq" id="XP_059747140.1">
    <property type="nucleotide sequence ID" value="XM_059891157.1"/>
</dbReference>
<dbReference type="RefSeq" id="XP_059747141.1">
    <property type="nucleotide sequence ID" value="XM_059891158.1"/>
</dbReference>
<dbReference type="SMR" id="Q2KI95"/>
<dbReference type="FunCoup" id="Q2KI95">
    <property type="interactions" value="117"/>
</dbReference>
<dbReference type="STRING" id="9913.ENSBTAP00000001440"/>
<dbReference type="PaxDb" id="9913-ENSBTAP00000001440"/>
<dbReference type="Ensembl" id="ENSBTAT00000001440.4">
    <property type="protein sequence ID" value="ENSBTAP00000001440.3"/>
    <property type="gene ID" value="ENSBTAG00000001086.5"/>
</dbReference>
<dbReference type="GeneID" id="510008"/>
<dbReference type="KEGG" id="bta:510008"/>
<dbReference type="CTD" id="2274"/>
<dbReference type="VEuPathDB" id="HostDB:ENSBTAG00000001086"/>
<dbReference type="VGNC" id="VGNC:29000">
    <property type="gene designation" value="FHL2"/>
</dbReference>
<dbReference type="eggNOG" id="KOG1704">
    <property type="taxonomic scope" value="Eukaryota"/>
</dbReference>
<dbReference type="GeneTree" id="ENSGT00950000183028"/>
<dbReference type="HOGENOM" id="CLU_001357_2_0_1"/>
<dbReference type="InParanoid" id="Q2KI95"/>
<dbReference type="OMA" id="CYEQQYA"/>
<dbReference type="OrthoDB" id="274660at2759"/>
<dbReference type="TreeFam" id="TF321684"/>
<dbReference type="Proteomes" id="UP000009136">
    <property type="component" value="Chromosome 11"/>
</dbReference>
<dbReference type="Bgee" id="ENSBTAG00000001086">
    <property type="expression patterns" value="Expressed in cardiac ventricle and 108 other cell types or tissues"/>
</dbReference>
<dbReference type="GO" id="GO:0005634">
    <property type="term" value="C:nucleus"/>
    <property type="evidence" value="ECO:0000318"/>
    <property type="project" value="GO_Central"/>
</dbReference>
<dbReference type="GO" id="GO:0030018">
    <property type="term" value="C:Z disc"/>
    <property type="evidence" value="ECO:0000250"/>
    <property type="project" value="UniProtKB"/>
</dbReference>
<dbReference type="GO" id="GO:0003714">
    <property type="term" value="F:transcription corepressor activity"/>
    <property type="evidence" value="ECO:0000318"/>
    <property type="project" value="GO_Central"/>
</dbReference>
<dbReference type="GO" id="GO:0008134">
    <property type="term" value="F:transcription factor binding"/>
    <property type="evidence" value="ECO:0000250"/>
    <property type="project" value="UniProtKB"/>
</dbReference>
<dbReference type="GO" id="GO:0008270">
    <property type="term" value="F:zinc ion binding"/>
    <property type="evidence" value="ECO:0007669"/>
    <property type="project" value="UniProtKB-KW"/>
</dbReference>
<dbReference type="GO" id="GO:0043066">
    <property type="term" value="P:negative regulation of apoptotic process"/>
    <property type="evidence" value="ECO:0000250"/>
    <property type="project" value="UniProtKB"/>
</dbReference>
<dbReference type="GO" id="GO:0070885">
    <property type="term" value="P:negative regulation of calcineurin-NFAT signaling cascade"/>
    <property type="evidence" value="ECO:0000250"/>
    <property type="project" value="UniProtKB"/>
</dbReference>
<dbReference type="GO" id="GO:0000122">
    <property type="term" value="P:negative regulation of transcription by RNA polymerase II"/>
    <property type="evidence" value="ECO:0000250"/>
    <property type="project" value="UniProtKB"/>
</dbReference>
<dbReference type="FunFam" id="2.10.110.10:FF:000013">
    <property type="entry name" value="Four and a half LIM domains 1"/>
    <property type="match status" value="1"/>
</dbReference>
<dbReference type="FunFam" id="2.10.110.10:FF:000030">
    <property type="entry name" value="Four and a half LIM domains protein 2"/>
    <property type="match status" value="1"/>
</dbReference>
<dbReference type="FunFam" id="2.10.110.10:FF:000048">
    <property type="entry name" value="Four and a half LIM domains protein 2"/>
    <property type="match status" value="1"/>
</dbReference>
<dbReference type="FunFam" id="2.10.110.10:FF:000049">
    <property type="entry name" value="Four and a half LIM domains protein 2"/>
    <property type="match status" value="1"/>
</dbReference>
<dbReference type="Gene3D" id="2.10.110.10">
    <property type="entry name" value="Cysteine Rich Protein"/>
    <property type="match status" value="4"/>
</dbReference>
<dbReference type="InterPro" id="IPR056807">
    <property type="entry name" value="LIM_FHL1/2/3/5_N"/>
</dbReference>
<dbReference type="InterPro" id="IPR001781">
    <property type="entry name" value="Znf_LIM"/>
</dbReference>
<dbReference type="PANTHER" id="PTHR24205">
    <property type="entry name" value="FOUR AND A HALF LIM DOMAINS PROTEIN"/>
    <property type="match status" value="1"/>
</dbReference>
<dbReference type="PANTHER" id="PTHR24205:SF3">
    <property type="entry name" value="FOUR AND A HALF LIM DOMAINS PROTEIN 2"/>
    <property type="match status" value="1"/>
</dbReference>
<dbReference type="Pfam" id="PF00412">
    <property type="entry name" value="LIM"/>
    <property type="match status" value="4"/>
</dbReference>
<dbReference type="Pfam" id="PF25076">
    <property type="entry name" value="LIM_FHL2-3_N"/>
    <property type="match status" value="1"/>
</dbReference>
<dbReference type="SMART" id="SM00132">
    <property type="entry name" value="LIM"/>
    <property type="match status" value="4"/>
</dbReference>
<dbReference type="SUPFAM" id="SSF57716">
    <property type="entry name" value="Glucocorticoid receptor-like (DNA-binding domain)"/>
    <property type="match status" value="5"/>
</dbReference>
<dbReference type="PROSITE" id="PS00478">
    <property type="entry name" value="LIM_DOMAIN_1"/>
    <property type="match status" value="4"/>
</dbReference>
<dbReference type="PROSITE" id="PS50023">
    <property type="entry name" value="LIM_DOMAIN_2"/>
    <property type="match status" value="4"/>
</dbReference>
<sequence>MTERFDCHHCEDSLFGRKYVLREEQPYCVACFEALFASTCEECGKLIGCDCKDLSYKDRHWHEACFHCSRCRGSLVDKPFAAKEDQLLCTDCYSQEYSSRCQECKKSIMPGTRKMEYKGSSWHETCFICHRCQQPIGTKSFIPKDSENFCVPCYERQYALQCVQCKKPITTGGVTYREQPWHRECFVCTACKKPLSGQRFTSRDEFAYCLGCFCDLYAKKCAGCANPISGLGGTKYISFEERQWHNDCFNCKKCSLSLVGRGFLTERDDILCPDCGKDI</sequence>
<feature type="chain" id="PRO_0000265105" description="Four and a half LIM domains protein 2">
    <location>
        <begin position="1"/>
        <end position="279"/>
    </location>
</feature>
<feature type="domain" description="LIM zinc-binding 1" evidence="5">
    <location>
        <begin position="40"/>
        <end position="92"/>
    </location>
</feature>
<feature type="domain" description="LIM zinc-binding 2" evidence="5">
    <location>
        <begin position="101"/>
        <end position="153"/>
    </location>
</feature>
<feature type="domain" description="LIM zinc-binding 3" evidence="5">
    <location>
        <begin position="162"/>
        <end position="212"/>
    </location>
</feature>
<feature type="domain" description="LIM zinc-binding 4" evidence="5">
    <location>
        <begin position="221"/>
        <end position="275"/>
    </location>
</feature>
<feature type="zinc finger region" description="C4-type" evidence="4">
    <location>
        <begin position="7"/>
        <end position="31"/>
    </location>
</feature>
<feature type="modified residue" description="Phosphoserine" evidence="3">
    <location>
        <position position="238"/>
    </location>
</feature>
<feature type="cross-link" description="Glycyl lysine isopeptide (Lys-Gly) (interchain with G-Cter in SUMO2)" evidence="3">
    <location>
        <position position="78"/>
    </location>
</feature>
<feature type="cross-link" description="Glycyl lysine isopeptide (Lys-Gly) (interchain with G-Cter in SUMO2)" evidence="3">
    <location>
        <position position="167"/>
    </location>
</feature>
<feature type="cross-link" description="Glycyl lysine isopeptide (Lys-Gly) (interchain with G-Cter in SUMO2)" evidence="3">
    <location>
        <position position="220"/>
    </location>
</feature>
<gene>
    <name type="primary">FHL2</name>
</gene>
<protein>
    <recommendedName>
        <fullName>Four and a half LIM domains protein 2</fullName>
        <shortName>FHL-2</shortName>
    </recommendedName>
</protein>